<name>EFG2_SACD2</name>
<dbReference type="EMBL" id="CP000282">
    <property type="protein sequence ID" value="ABD80192.1"/>
    <property type="molecule type" value="Genomic_DNA"/>
</dbReference>
<dbReference type="RefSeq" id="WP_011467413.1">
    <property type="nucleotide sequence ID" value="NC_007912.1"/>
</dbReference>
<dbReference type="SMR" id="Q21M87"/>
<dbReference type="STRING" id="203122.Sde_0930"/>
<dbReference type="GeneID" id="98612616"/>
<dbReference type="KEGG" id="sde:Sde_0930"/>
<dbReference type="eggNOG" id="COG0480">
    <property type="taxonomic scope" value="Bacteria"/>
</dbReference>
<dbReference type="HOGENOM" id="CLU_002794_4_1_6"/>
<dbReference type="OrthoDB" id="9801472at2"/>
<dbReference type="Proteomes" id="UP000001947">
    <property type="component" value="Chromosome"/>
</dbReference>
<dbReference type="GO" id="GO:0005737">
    <property type="term" value="C:cytoplasm"/>
    <property type="evidence" value="ECO:0007669"/>
    <property type="project" value="UniProtKB-SubCell"/>
</dbReference>
<dbReference type="GO" id="GO:0005525">
    <property type="term" value="F:GTP binding"/>
    <property type="evidence" value="ECO:0007669"/>
    <property type="project" value="UniProtKB-UniRule"/>
</dbReference>
<dbReference type="GO" id="GO:0003924">
    <property type="term" value="F:GTPase activity"/>
    <property type="evidence" value="ECO:0007669"/>
    <property type="project" value="InterPro"/>
</dbReference>
<dbReference type="GO" id="GO:0097216">
    <property type="term" value="F:guanosine tetraphosphate binding"/>
    <property type="evidence" value="ECO:0007669"/>
    <property type="project" value="UniProtKB-ARBA"/>
</dbReference>
<dbReference type="GO" id="GO:0003746">
    <property type="term" value="F:translation elongation factor activity"/>
    <property type="evidence" value="ECO:0007669"/>
    <property type="project" value="UniProtKB-UniRule"/>
</dbReference>
<dbReference type="GO" id="GO:0032790">
    <property type="term" value="P:ribosome disassembly"/>
    <property type="evidence" value="ECO:0007669"/>
    <property type="project" value="TreeGrafter"/>
</dbReference>
<dbReference type="CDD" id="cd01886">
    <property type="entry name" value="EF-G"/>
    <property type="match status" value="1"/>
</dbReference>
<dbReference type="CDD" id="cd16262">
    <property type="entry name" value="EFG_III"/>
    <property type="match status" value="1"/>
</dbReference>
<dbReference type="CDD" id="cd01434">
    <property type="entry name" value="EFG_mtEFG1_IV"/>
    <property type="match status" value="1"/>
</dbReference>
<dbReference type="CDD" id="cd03713">
    <property type="entry name" value="EFG_mtEFG_C"/>
    <property type="match status" value="1"/>
</dbReference>
<dbReference type="CDD" id="cd04088">
    <property type="entry name" value="EFG_mtEFG_II"/>
    <property type="match status" value="1"/>
</dbReference>
<dbReference type="FunFam" id="2.40.30.10:FF:000006">
    <property type="entry name" value="Elongation factor G"/>
    <property type="match status" value="1"/>
</dbReference>
<dbReference type="FunFam" id="3.30.230.10:FF:000003">
    <property type="entry name" value="Elongation factor G"/>
    <property type="match status" value="1"/>
</dbReference>
<dbReference type="FunFam" id="3.30.70.240:FF:000001">
    <property type="entry name" value="Elongation factor G"/>
    <property type="match status" value="1"/>
</dbReference>
<dbReference type="FunFam" id="3.30.70.870:FF:000006">
    <property type="entry name" value="Elongation factor G"/>
    <property type="match status" value="1"/>
</dbReference>
<dbReference type="FunFam" id="3.40.50.300:FF:000029">
    <property type="entry name" value="Elongation factor G"/>
    <property type="match status" value="1"/>
</dbReference>
<dbReference type="Gene3D" id="3.30.230.10">
    <property type="match status" value="1"/>
</dbReference>
<dbReference type="Gene3D" id="3.30.70.240">
    <property type="match status" value="1"/>
</dbReference>
<dbReference type="Gene3D" id="3.30.70.870">
    <property type="entry name" value="Elongation Factor G (Translational Gtpase), domain 3"/>
    <property type="match status" value="1"/>
</dbReference>
<dbReference type="Gene3D" id="3.40.50.300">
    <property type="entry name" value="P-loop containing nucleotide triphosphate hydrolases"/>
    <property type="match status" value="1"/>
</dbReference>
<dbReference type="Gene3D" id="2.40.30.10">
    <property type="entry name" value="Translation factors"/>
    <property type="match status" value="1"/>
</dbReference>
<dbReference type="HAMAP" id="MF_00054_B">
    <property type="entry name" value="EF_G_EF_2_B"/>
    <property type="match status" value="1"/>
</dbReference>
<dbReference type="InterPro" id="IPR041095">
    <property type="entry name" value="EFG_II"/>
</dbReference>
<dbReference type="InterPro" id="IPR009022">
    <property type="entry name" value="EFG_III"/>
</dbReference>
<dbReference type="InterPro" id="IPR035647">
    <property type="entry name" value="EFG_III/V"/>
</dbReference>
<dbReference type="InterPro" id="IPR047872">
    <property type="entry name" value="EFG_IV"/>
</dbReference>
<dbReference type="InterPro" id="IPR035649">
    <property type="entry name" value="EFG_V"/>
</dbReference>
<dbReference type="InterPro" id="IPR000640">
    <property type="entry name" value="EFG_V-like"/>
</dbReference>
<dbReference type="InterPro" id="IPR004161">
    <property type="entry name" value="EFTu-like_2"/>
</dbReference>
<dbReference type="InterPro" id="IPR031157">
    <property type="entry name" value="G_TR_CS"/>
</dbReference>
<dbReference type="InterPro" id="IPR027417">
    <property type="entry name" value="P-loop_NTPase"/>
</dbReference>
<dbReference type="InterPro" id="IPR020568">
    <property type="entry name" value="Ribosomal_Su5_D2-typ_SF"/>
</dbReference>
<dbReference type="InterPro" id="IPR014721">
    <property type="entry name" value="Ribsml_uS5_D2-typ_fold_subgr"/>
</dbReference>
<dbReference type="InterPro" id="IPR005225">
    <property type="entry name" value="Small_GTP-bd"/>
</dbReference>
<dbReference type="InterPro" id="IPR000795">
    <property type="entry name" value="T_Tr_GTP-bd_dom"/>
</dbReference>
<dbReference type="InterPro" id="IPR009000">
    <property type="entry name" value="Transl_B-barrel_sf"/>
</dbReference>
<dbReference type="InterPro" id="IPR004540">
    <property type="entry name" value="Transl_elong_EFG/EF2"/>
</dbReference>
<dbReference type="InterPro" id="IPR005517">
    <property type="entry name" value="Transl_elong_EFG/EF2_IV"/>
</dbReference>
<dbReference type="NCBIfam" id="TIGR00484">
    <property type="entry name" value="EF-G"/>
    <property type="match status" value="1"/>
</dbReference>
<dbReference type="NCBIfam" id="NF009381">
    <property type="entry name" value="PRK12740.1-5"/>
    <property type="match status" value="1"/>
</dbReference>
<dbReference type="NCBIfam" id="TIGR00231">
    <property type="entry name" value="small_GTP"/>
    <property type="match status" value="1"/>
</dbReference>
<dbReference type="PANTHER" id="PTHR43261:SF5">
    <property type="entry name" value="ELONGATION FACTOR G 1"/>
    <property type="match status" value="1"/>
</dbReference>
<dbReference type="PANTHER" id="PTHR43261">
    <property type="entry name" value="TRANSLATION ELONGATION FACTOR G-RELATED"/>
    <property type="match status" value="1"/>
</dbReference>
<dbReference type="Pfam" id="PF00679">
    <property type="entry name" value="EFG_C"/>
    <property type="match status" value="1"/>
</dbReference>
<dbReference type="Pfam" id="PF14492">
    <property type="entry name" value="EFG_III"/>
    <property type="match status" value="1"/>
</dbReference>
<dbReference type="Pfam" id="PF03764">
    <property type="entry name" value="EFG_IV"/>
    <property type="match status" value="1"/>
</dbReference>
<dbReference type="Pfam" id="PF00009">
    <property type="entry name" value="GTP_EFTU"/>
    <property type="match status" value="1"/>
</dbReference>
<dbReference type="Pfam" id="PF03144">
    <property type="entry name" value="GTP_EFTU_D2"/>
    <property type="match status" value="1"/>
</dbReference>
<dbReference type="PRINTS" id="PR00315">
    <property type="entry name" value="ELONGATNFCT"/>
</dbReference>
<dbReference type="SMART" id="SM00838">
    <property type="entry name" value="EFG_C"/>
    <property type="match status" value="1"/>
</dbReference>
<dbReference type="SMART" id="SM00889">
    <property type="entry name" value="EFG_IV"/>
    <property type="match status" value="1"/>
</dbReference>
<dbReference type="SUPFAM" id="SSF54980">
    <property type="entry name" value="EF-G C-terminal domain-like"/>
    <property type="match status" value="2"/>
</dbReference>
<dbReference type="SUPFAM" id="SSF52540">
    <property type="entry name" value="P-loop containing nucleoside triphosphate hydrolases"/>
    <property type="match status" value="1"/>
</dbReference>
<dbReference type="SUPFAM" id="SSF54211">
    <property type="entry name" value="Ribosomal protein S5 domain 2-like"/>
    <property type="match status" value="1"/>
</dbReference>
<dbReference type="SUPFAM" id="SSF50447">
    <property type="entry name" value="Translation proteins"/>
    <property type="match status" value="1"/>
</dbReference>
<dbReference type="PROSITE" id="PS00301">
    <property type="entry name" value="G_TR_1"/>
    <property type="match status" value="1"/>
</dbReference>
<dbReference type="PROSITE" id="PS51722">
    <property type="entry name" value="G_TR_2"/>
    <property type="match status" value="1"/>
</dbReference>
<accession>Q21M87</accession>
<keyword id="KW-0963">Cytoplasm</keyword>
<keyword id="KW-0251">Elongation factor</keyword>
<keyword id="KW-0342">GTP-binding</keyword>
<keyword id="KW-0547">Nucleotide-binding</keyword>
<keyword id="KW-0648">Protein biosynthesis</keyword>
<keyword id="KW-1185">Reference proteome</keyword>
<comment type="function">
    <text evidence="1">Catalyzes the GTP-dependent ribosomal translocation step during translation elongation. During this step, the ribosome changes from the pre-translocational (PRE) to the post-translocational (POST) state as the newly formed A-site-bound peptidyl-tRNA and P-site-bound deacylated tRNA move to the P and E sites, respectively. Catalyzes the coordinated movement of the two tRNA molecules, the mRNA and conformational changes in the ribosome.</text>
</comment>
<comment type="subcellular location">
    <subcellularLocation>
        <location evidence="1">Cytoplasm</location>
    </subcellularLocation>
</comment>
<comment type="similarity">
    <text evidence="1">Belongs to the TRAFAC class translation factor GTPase superfamily. Classic translation factor GTPase family. EF-G/EF-2 subfamily.</text>
</comment>
<organism>
    <name type="scientific">Saccharophagus degradans (strain 2-40 / ATCC 43961 / DSM 17024)</name>
    <dbReference type="NCBI Taxonomy" id="203122"/>
    <lineage>
        <taxon>Bacteria</taxon>
        <taxon>Pseudomonadati</taxon>
        <taxon>Pseudomonadota</taxon>
        <taxon>Gammaproteobacteria</taxon>
        <taxon>Cellvibrionales</taxon>
        <taxon>Cellvibrionaceae</taxon>
        <taxon>Saccharophagus</taxon>
    </lineage>
</organism>
<protein>
    <recommendedName>
        <fullName evidence="1">Elongation factor G 2</fullName>
        <shortName evidence="1">EF-G 2</shortName>
    </recommendedName>
</protein>
<feature type="chain" id="PRO_0000263501" description="Elongation factor G 2">
    <location>
        <begin position="1"/>
        <end position="697"/>
    </location>
</feature>
<feature type="domain" description="tr-type G">
    <location>
        <begin position="5"/>
        <end position="280"/>
    </location>
</feature>
<feature type="binding site" evidence="1">
    <location>
        <begin position="14"/>
        <end position="21"/>
    </location>
    <ligand>
        <name>GTP</name>
        <dbReference type="ChEBI" id="CHEBI:37565"/>
    </ligand>
</feature>
<feature type="binding site" evidence="1">
    <location>
        <begin position="78"/>
        <end position="82"/>
    </location>
    <ligand>
        <name>GTP</name>
        <dbReference type="ChEBI" id="CHEBI:37565"/>
    </ligand>
</feature>
<feature type="binding site" evidence="1">
    <location>
        <begin position="132"/>
        <end position="135"/>
    </location>
    <ligand>
        <name>GTP</name>
        <dbReference type="ChEBI" id="CHEBI:37565"/>
    </ligand>
</feature>
<evidence type="ECO:0000255" key="1">
    <source>
        <dbReference type="HAMAP-Rule" id="MF_00054"/>
    </source>
</evidence>
<reference key="1">
    <citation type="journal article" date="2008" name="PLoS Genet.">
        <title>Complete genome sequence of the complex carbohydrate-degrading marine bacterium, Saccharophagus degradans strain 2-40 T.</title>
        <authorList>
            <person name="Weiner R.M."/>
            <person name="Taylor L.E. II"/>
            <person name="Henrissat B."/>
            <person name="Hauser L."/>
            <person name="Land M."/>
            <person name="Coutinho P.M."/>
            <person name="Rancurel C."/>
            <person name="Saunders E.H."/>
            <person name="Longmire A.G."/>
            <person name="Zhang H."/>
            <person name="Bayer E.A."/>
            <person name="Gilbert H.J."/>
            <person name="Larimer F."/>
            <person name="Zhulin I.B."/>
            <person name="Ekborg N.A."/>
            <person name="Lamed R."/>
            <person name="Richardson P.M."/>
            <person name="Borovok I."/>
            <person name="Hutcheson S."/>
        </authorList>
    </citation>
    <scope>NUCLEOTIDE SEQUENCE [LARGE SCALE GENOMIC DNA]</scope>
    <source>
        <strain>2-40 / ATCC 43961 / DSM 17024</strain>
    </source>
</reference>
<proteinExistence type="inferred from homology"/>
<sequence>MTDLSLYRNIGIFAHVDAGKTTTTERILKLTGKIHKLGEVHEGESTTDFMEQEAERGITIQSAAVTCEWKGHRLNVIDTPGHVDFTVEVYRSLKVLDGGIGVFCGSGGVEPQSETNWRYANDSEVARVIFVNKLDRVGADFLRVVEQVKKVLGANPLVMTLPIGREDTFTGVVDVLTKKAYIWDDSGLPENYEVTDVPADMVDEVDMYHEQLVETAVEQDDDLMMAYMEGEVPTVEQLKKCIRKGTRDLTFFPTFCGSAFKNKGVQLVLDAVVDYLPSPTEVDPQPLTDEEGNETGEHALVSADEPLRALAFKIMDDRFGALTFIRIYSGRMEKGMTVLNSFTGKTERIGRMVEMQANDRNEITSAQAGDILAVVGMKNVQTGHTLCDPKHPCTLEAMVFPEPVISIAVAPKDKTGSEKMGVAIGKMVAEDPSFRVETDEDSGETILKGMGELHLDIKVDILKRTYGVELNVGKPQVAYRETITQAIEDSYTHKKQSGGSGQFGKIDYRIRPGEPGTGFKFSSVVVGGNVPKEFFPAIEKGFSTMMAEGPLAGYPVLDVEIELYDGSYHAVDSSAVAFEIAAKGAFRQSMPKAGPQIIEPIMKVDVFTPEDHVGDVIGDLNRRRGMIKDQEPGVTGVRIKADVPLSEMFGYIGHLRTMTSGRGQFSMEFSHYLPCPNAVAEEVIAEAKKRKEEKAKK</sequence>
<gene>
    <name evidence="1" type="primary">fusA2</name>
    <name type="ordered locus">Sde_0930</name>
</gene>